<organism>
    <name type="scientific">Invertebrate iridescent virus 6</name>
    <name type="common">IIV-6</name>
    <name type="synonym">Chilo iridescent virus</name>
    <dbReference type="NCBI Taxonomy" id="176652"/>
    <lineage>
        <taxon>Viruses</taxon>
        <taxon>Varidnaviria</taxon>
        <taxon>Bamfordvirae</taxon>
        <taxon>Nucleocytoviricota</taxon>
        <taxon>Megaviricetes</taxon>
        <taxon>Pimascovirales</taxon>
        <taxon>Iridoviridae</taxon>
        <taxon>Betairidovirinae</taxon>
        <taxon>Iridovirus</taxon>
    </lineage>
</organism>
<gene>
    <name type="ORF">IIV6-203L</name>
</gene>
<name>VF203_IIV6</name>
<organismHost>
    <name type="scientific">Acheta domesticus</name>
    <name type="common">House cricket</name>
    <dbReference type="NCBI Taxonomy" id="6997"/>
</organismHost>
<organismHost>
    <name type="scientific">Chilo suppressalis</name>
    <name type="common">Asiatic rice borer moth</name>
    <dbReference type="NCBI Taxonomy" id="168631"/>
</organismHost>
<organismHost>
    <name type="scientific">Gryllus bimaculatus</name>
    <name type="common">Two-spotted cricket</name>
    <dbReference type="NCBI Taxonomy" id="6999"/>
</organismHost>
<organismHost>
    <name type="scientific">Gryllus campestris</name>
    <dbReference type="NCBI Taxonomy" id="58607"/>
</organismHost>
<organismHost>
    <name type="scientific">Spodoptera frugiperda</name>
    <name type="common">Fall armyworm</name>
    <dbReference type="NCBI Taxonomy" id="7108"/>
</organismHost>
<comment type="subcellular location">
    <subcellularLocation>
        <location evidence="2">Membrane</location>
        <topology evidence="2">Single-pass membrane protein</topology>
    </subcellularLocation>
</comment>
<comment type="similarity">
    <text evidence="2">Belongs to the IIV-6 203L/325L family.</text>
</comment>
<keyword id="KW-0472">Membrane</keyword>
<keyword id="KW-1185">Reference proteome</keyword>
<keyword id="KW-0812">Transmembrane</keyword>
<keyword id="KW-1133">Transmembrane helix</keyword>
<reference key="1">
    <citation type="journal article" date="2001" name="Virology">
        <title>Analysis of the first complete DNA sequence of an invertebrate iridovirus: coding strategy of the genome of Chilo iridescent virus.</title>
        <authorList>
            <person name="Jakob N.J."/>
            <person name="Mueller K."/>
            <person name="Bahr U."/>
            <person name="Darai G."/>
        </authorList>
    </citation>
    <scope>NUCLEOTIDE SEQUENCE [LARGE SCALE GENOMIC DNA]</scope>
</reference>
<reference key="2">
    <citation type="journal article" date="2007" name="Virol. J.">
        <title>Comparative genomic analysis of the family Iridoviridae: re-annotating and defining the core set of iridovirus genes.</title>
        <authorList>
            <person name="Eaton H.E."/>
            <person name="Metcalf J."/>
            <person name="Penny E."/>
            <person name="Tcherepanov V."/>
            <person name="Upton C."/>
            <person name="Brunetti C.R."/>
        </authorList>
    </citation>
    <scope>GENOME REANNOTATION</scope>
</reference>
<evidence type="ECO:0000255" key="1"/>
<evidence type="ECO:0000305" key="2"/>
<feature type="chain" id="PRO_0000378024" description="Uncharacterized protein 203L">
    <location>
        <begin position="1"/>
        <end position="160"/>
    </location>
</feature>
<feature type="transmembrane region" description="Helical" evidence="1">
    <location>
        <begin position="1"/>
        <end position="21"/>
    </location>
</feature>
<protein>
    <recommendedName>
        <fullName>Uncharacterized protein 203L</fullName>
    </recommendedName>
</protein>
<dbReference type="EMBL" id="AF303741">
    <property type="protein sequence ID" value="AAK82065.1"/>
    <property type="molecule type" value="Genomic_DNA"/>
</dbReference>
<dbReference type="RefSeq" id="NP_149666.1">
    <property type="nucleotide sequence ID" value="NC_003038.1"/>
</dbReference>
<dbReference type="SMR" id="Q91FW7"/>
<dbReference type="KEGG" id="vg:1733073"/>
<dbReference type="OrthoDB" id="34975at10239"/>
<dbReference type="Proteomes" id="UP000001359">
    <property type="component" value="Genome"/>
</dbReference>
<dbReference type="GO" id="GO:0016020">
    <property type="term" value="C:membrane"/>
    <property type="evidence" value="ECO:0007669"/>
    <property type="project" value="UniProtKB-SubCell"/>
</dbReference>
<sequence>MSIQTLIIISIVIFILWLTFTSGSSYDPYHNFMKQKNHIFHNINKWVKKDVSKFLETLLKPFDKQCVGKTRTIESLEKLRTENNVEFKKLLNCGYIHNLFILIGLSVWEDFSKLHTETSLNTFINECLIPISTSPNFVAGNMLYTQTKPGVLKCLNDKNL</sequence>
<proteinExistence type="inferred from homology"/>
<accession>Q91FW7</accession>